<sequence>MDPPAEKPGEAGGLQITPQLLKSRTGEFSLESILLLKLRGLGLADLGCLGECLGLEWLDLSGNALTHLGPLASLRQLAVLNVSNNRLTGLEPLATCENLQSLNAAGNLLATPGQLQCLAGLPCLEYLRLRDPLARLSNPLCANPSYWAAVRELLPGLKVIDGERVIGRGSEFYQLCRDLDSSLRPSSSPGPRATEAQPWVEPGYWESWPSRSSSILEEACRQFQDTLQECWDLDRQASDSLAQAEQVLSSAGPTSSFVF</sequence>
<protein>
    <recommendedName>
        <fullName>Leucine-rich repeat-containing protein 61</fullName>
    </recommendedName>
</protein>
<gene>
    <name type="primary">LRRC61</name>
</gene>
<comment type="interaction">
    <interactant intactId="EBI-2350424">
        <id>Q9BV99</id>
    </interactant>
    <interactant intactId="EBI-10988864">
        <id>P46379-2</id>
        <label>BAG6</label>
    </interactant>
    <organismsDiffer>false</organismsDiffer>
    <experiments>3</experiments>
</comment>
<comment type="interaction">
    <interactant intactId="EBI-2350424">
        <id>Q9BV99</id>
    </interactant>
    <interactant intactId="EBI-747505">
        <id>Q8TAB5</id>
        <label>C1orf216</label>
    </interactant>
    <organismsDiffer>false</organismsDiffer>
    <experiments>3</experiments>
</comment>
<comment type="interaction">
    <interactant intactId="EBI-2350424">
        <id>Q9BV99</id>
    </interactant>
    <interactant intactId="EBI-21553822">
        <id>Q96A83-2</id>
        <label>COL26A1</label>
    </interactant>
    <organismsDiffer>false</organismsDiffer>
    <experiments>3</experiments>
</comment>
<comment type="interaction">
    <interactant intactId="EBI-2350424">
        <id>Q9BV99</id>
    </interactant>
    <interactant intactId="EBI-395638">
        <id>O14645</id>
        <label>DNALI1</label>
    </interactant>
    <organismsDiffer>false</organismsDiffer>
    <experiments>3</experiments>
</comment>
<comment type="interaction">
    <interactant intactId="EBI-2350424">
        <id>Q9BV99</id>
    </interactant>
    <interactant intactId="EBI-743105">
        <id>Q5JVL4</id>
        <label>EFHC1</label>
    </interactant>
    <organismsDiffer>false</organismsDiffer>
    <experiments>3</experiments>
</comment>
<comment type="interaction">
    <interactant intactId="EBI-2350424">
        <id>Q9BV99</id>
    </interactant>
    <interactant intactId="EBI-744099">
        <id>Q9H0I2</id>
        <label>ENKD1</label>
    </interactant>
    <organismsDiffer>false</organismsDiffer>
    <experiments>3</experiments>
</comment>
<comment type="interaction">
    <interactant intactId="EBI-2350424">
        <id>Q9BV99</id>
    </interactant>
    <interactant intactId="EBI-2807642">
        <id>Q8WU58</id>
        <label>FAM222B</label>
    </interactant>
    <organismsDiffer>false</organismsDiffer>
    <experiments>3</experiments>
</comment>
<comment type="interaction">
    <interactant intactId="EBI-2350424">
        <id>Q9BV99</id>
    </interactant>
    <interactant intactId="EBI-740220">
        <id>O14964</id>
        <label>HGS</label>
    </interactant>
    <organismsDiffer>false</organismsDiffer>
    <experiments>3</experiments>
</comment>
<comment type="interaction">
    <interactant intactId="EBI-2350424">
        <id>Q9BV99</id>
    </interactant>
    <interactant intactId="EBI-6398041">
        <id>Q9UMF0</id>
        <label>ICAM5</label>
    </interactant>
    <organismsDiffer>false</organismsDiffer>
    <experiments>3</experiments>
</comment>
<comment type="interaction">
    <interactant intactId="EBI-2350424">
        <id>Q9BV99</id>
    </interactant>
    <interactant intactId="EBI-948266">
        <id>O14901</id>
        <label>KLF11</label>
    </interactant>
    <organismsDiffer>false</organismsDiffer>
    <experiments>3</experiments>
</comment>
<comment type="interaction">
    <interactant intactId="EBI-2350424">
        <id>Q9BV99</id>
    </interactant>
    <interactant intactId="EBI-4314821">
        <id>Q13449</id>
        <label>LSAMP</label>
    </interactant>
    <organismsDiffer>false</organismsDiffer>
    <experiments>3</experiments>
</comment>
<comment type="interaction">
    <interactant intactId="EBI-2350424">
        <id>Q9BV99</id>
    </interactant>
    <interactant intactId="EBI-6190702">
        <id>P28331-2</id>
        <label>NDUFS1</label>
    </interactant>
    <organismsDiffer>false</organismsDiffer>
    <experiments>3</experiments>
</comment>
<comment type="interaction">
    <interactant intactId="EBI-2350424">
        <id>Q9BV99</id>
    </interactant>
    <interactant intactId="EBI-2811583">
        <id>Q9BVL2</id>
        <label>NUP58</label>
    </interactant>
    <organismsDiffer>false</organismsDiffer>
    <experiments>3</experiments>
</comment>
<comment type="interaction">
    <interactant intactId="EBI-2350424">
        <id>Q9BV99</id>
    </interactant>
    <interactant intactId="EBI-602382">
        <id>Q16512</id>
        <label>PKN1</label>
    </interactant>
    <organismsDiffer>false</organismsDiffer>
    <experiments>3</experiments>
</comment>
<proteinExistence type="evidence at protein level"/>
<keyword id="KW-0433">Leucine-rich repeat</keyword>
<keyword id="KW-1267">Proteomics identification</keyword>
<keyword id="KW-1185">Reference proteome</keyword>
<keyword id="KW-0677">Repeat</keyword>
<accession>Q9BV99</accession>
<accession>B3KUW0</accession>
<accession>D3DWY8</accession>
<reference key="1">
    <citation type="journal article" date="2004" name="Nat. Genet.">
        <title>Complete sequencing and characterization of 21,243 full-length human cDNAs.</title>
        <authorList>
            <person name="Ota T."/>
            <person name="Suzuki Y."/>
            <person name="Nishikawa T."/>
            <person name="Otsuki T."/>
            <person name="Sugiyama T."/>
            <person name="Irie R."/>
            <person name="Wakamatsu A."/>
            <person name="Hayashi K."/>
            <person name="Sato H."/>
            <person name="Nagai K."/>
            <person name="Kimura K."/>
            <person name="Makita H."/>
            <person name="Sekine M."/>
            <person name="Obayashi M."/>
            <person name="Nishi T."/>
            <person name="Shibahara T."/>
            <person name="Tanaka T."/>
            <person name="Ishii S."/>
            <person name="Yamamoto J."/>
            <person name="Saito K."/>
            <person name="Kawai Y."/>
            <person name="Isono Y."/>
            <person name="Nakamura Y."/>
            <person name="Nagahari K."/>
            <person name="Murakami K."/>
            <person name="Yasuda T."/>
            <person name="Iwayanagi T."/>
            <person name="Wagatsuma M."/>
            <person name="Shiratori A."/>
            <person name="Sudo H."/>
            <person name="Hosoiri T."/>
            <person name="Kaku Y."/>
            <person name="Kodaira H."/>
            <person name="Kondo H."/>
            <person name="Sugawara M."/>
            <person name="Takahashi M."/>
            <person name="Kanda K."/>
            <person name="Yokoi T."/>
            <person name="Furuya T."/>
            <person name="Kikkawa E."/>
            <person name="Omura Y."/>
            <person name="Abe K."/>
            <person name="Kamihara K."/>
            <person name="Katsuta N."/>
            <person name="Sato K."/>
            <person name="Tanikawa M."/>
            <person name="Yamazaki M."/>
            <person name="Ninomiya K."/>
            <person name="Ishibashi T."/>
            <person name="Yamashita H."/>
            <person name="Murakawa K."/>
            <person name="Fujimori K."/>
            <person name="Tanai H."/>
            <person name="Kimata M."/>
            <person name="Watanabe M."/>
            <person name="Hiraoka S."/>
            <person name="Chiba Y."/>
            <person name="Ishida S."/>
            <person name="Ono Y."/>
            <person name="Takiguchi S."/>
            <person name="Watanabe S."/>
            <person name="Yosida M."/>
            <person name="Hotuta T."/>
            <person name="Kusano J."/>
            <person name="Kanehori K."/>
            <person name="Takahashi-Fujii A."/>
            <person name="Hara H."/>
            <person name="Tanase T.-O."/>
            <person name="Nomura Y."/>
            <person name="Togiya S."/>
            <person name="Komai F."/>
            <person name="Hara R."/>
            <person name="Takeuchi K."/>
            <person name="Arita M."/>
            <person name="Imose N."/>
            <person name="Musashino K."/>
            <person name="Yuuki H."/>
            <person name="Oshima A."/>
            <person name="Sasaki N."/>
            <person name="Aotsuka S."/>
            <person name="Yoshikawa Y."/>
            <person name="Matsunawa H."/>
            <person name="Ichihara T."/>
            <person name="Shiohata N."/>
            <person name="Sano S."/>
            <person name="Moriya S."/>
            <person name="Momiyama H."/>
            <person name="Satoh N."/>
            <person name="Takami S."/>
            <person name="Terashima Y."/>
            <person name="Suzuki O."/>
            <person name="Nakagawa S."/>
            <person name="Senoh A."/>
            <person name="Mizoguchi H."/>
            <person name="Goto Y."/>
            <person name="Shimizu F."/>
            <person name="Wakebe H."/>
            <person name="Hishigaki H."/>
            <person name="Watanabe T."/>
            <person name="Sugiyama A."/>
            <person name="Takemoto M."/>
            <person name="Kawakami B."/>
            <person name="Yamazaki M."/>
            <person name="Watanabe K."/>
            <person name="Kumagai A."/>
            <person name="Itakura S."/>
            <person name="Fukuzumi Y."/>
            <person name="Fujimori Y."/>
            <person name="Komiyama M."/>
            <person name="Tashiro H."/>
            <person name="Tanigami A."/>
            <person name="Fujiwara T."/>
            <person name="Ono T."/>
            <person name="Yamada K."/>
            <person name="Fujii Y."/>
            <person name="Ozaki K."/>
            <person name="Hirao M."/>
            <person name="Ohmori Y."/>
            <person name="Kawabata A."/>
            <person name="Hikiji T."/>
            <person name="Kobatake N."/>
            <person name="Inagaki H."/>
            <person name="Ikema Y."/>
            <person name="Okamoto S."/>
            <person name="Okitani R."/>
            <person name="Kawakami T."/>
            <person name="Noguchi S."/>
            <person name="Itoh T."/>
            <person name="Shigeta K."/>
            <person name="Senba T."/>
            <person name="Matsumura K."/>
            <person name="Nakajima Y."/>
            <person name="Mizuno T."/>
            <person name="Morinaga M."/>
            <person name="Sasaki M."/>
            <person name="Togashi T."/>
            <person name="Oyama M."/>
            <person name="Hata H."/>
            <person name="Watanabe M."/>
            <person name="Komatsu T."/>
            <person name="Mizushima-Sugano J."/>
            <person name="Satoh T."/>
            <person name="Shirai Y."/>
            <person name="Takahashi Y."/>
            <person name="Nakagawa K."/>
            <person name="Okumura K."/>
            <person name="Nagase T."/>
            <person name="Nomura N."/>
            <person name="Kikuchi H."/>
            <person name="Masuho Y."/>
            <person name="Yamashita R."/>
            <person name="Nakai K."/>
            <person name="Yada T."/>
            <person name="Nakamura Y."/>
            <person name="Ohara O."/>
            <person name="Isogai T."/>
            <person name="Sugano S."/>
        </authorList>
    </citation>
    <scope>NUCLEOTIDE SEQUENCE [LARGE SCALE MRNA]</scope>
    <scope>VARIANT SER-143</scope>
    <source>
        <tissue>Ovary</tissue>
    </source>
</reference>
<reference key="2">
    <citation type="journal article" date="2003" name="Nature">
        <title>The DNA sequence of human chromosome 7.</title>
        <authorList>
            <person name="Hillier L.W."/>
            <person name="Fulton R.S."/>
            <person name="Fulton L.A."/>
            <person name="Graves T.A."/>
            <person name="Pepin K.H."/>
            <person name="Wagner-McPherson C."/>
            <person name="Layman D."/>
            <person name="Maas J."/>
            <person name="Jaeger S."/>
            <person name="Walker R."/>
            <person name="Wylie K."/>
            <person name="Sekhon M."/>
            <person name="Becker M.C."/>
            <person name="O'Laughlin M.D."/>
            <person name="Schaller M.E."/>
            <person name="Fewell G.A."/>
            <person name="Delehaunty K.D."/>
            <person name="Miner T.L."/>
            <person name="Nash W.E."/>
            <person name="Cordes M."/>
            <person name="Du H."/>
            <person name="Sun H."/>
            <person name="Edwards J."/>
            <person name="Bradshaw-Cordum H."/>
            <person name="Ali J."/>
            <person name="Andrews S."/>
            <person name="Isak A."/>
            <person name="Vanbrunt A."/>
            <person name="Nguyen C."/>
            <person name="Du F."/>
            <person name="Lamar B."/>
            <person name="Courtney L."/>
            <person name="Kalicki J."/>
            <person name="Ozersky P."/>
            <person name="Bielicki L."/>
            <person name="Scott K."/>
            <person name="Holmes A."/>
            <person name="Harkins R."/>
            <person name="Harris A."/>
            <person name="Strong C.M."/>
            <person name="Hou S."/>
            <person name="Tomlinson C."/>
            <person name="Dauphin-Kohlberg S."/>
            <person name="Kozlowicz-Reilly A."/>
            <person name="Leonard S."/>
            <person name="Rohlfing T."/>
            <person name="Rock S.M."/>
            <person name="Tin-Wollam A.-M."/>
            <person name="Abbott A."/>
            <person name="Minx P."/>
            <person name="Maupin R."/>
            <person name="Strowmatt C."/>
            <person name="Latreille P."/>
            <person name="Miller N."/>
            <person name="Johnson D."/>
            <person name="Murray J."/>
            <person name="Woessner J.P."/>
            <person name="Wendl M.C."/>
            <person name="Yang S.-P."/>
            <person name="Schultz B.R."/>
            <person name="Wallis J.W."/>
            <person name="Spieth J."/>
            <person name="Bieri T.A."/>
            <person name="Nelson J.O."/>
            <person name="Berkowicz N."/>
            <person name="Wohldmann P.E."/>
            <person name="Cook L.L."/>
            <person name="Hickenbotham M.T."/>
            <person name="Eldred J."/>
            <person name="Williams D."/>
            <person name="Bedell J.A."/>
            <person name="Mardis E.R."/>
            <person name="Clifton S.W."/>
            <person name="Chissoe S.L."/>
            <person name="Marra M.A."/>
            <person name="Raymond C."/>
            <person name="Haugen E."/>
            <person name="Gillett W."/>
            <person name="Zhou Y."/>
            <person name="James R."/>
            <person name="Phelps K."/>
            <person name="Iadanoto S."/>
            <person name="Bubb K."/>
            <person name="Simms E."/>
            <person name="Levy R."/>
            <person name="Clendenning J."/>
            <person name="Kaul R."/>
            <person name="Kent W.J."/>
            <person name="Furey T.S."/>
            <person name="Baertsch R.A."/>
            <person name="Brent M.R."/>
            <person name="Keibler E."/>
            <person name="Flicek P."/>
            <person name="Bork P."/>
            <person name="Suyama M."/>
            <person name="Bailey J.A."/>
            <person name="Portnoy M.E."/>
            <person name="Torrents D."/>
            <person name="Chinwalla A.T."/>
            <person name="Gish W.R."/>
            <person name="Eddy S.R."/>
            <person name="McPherson J.D."/>
            <person name="Olson M.V."/>
            <person name="Eichler E.E."/>
            <person name="Green E.D."/>
            <person name="Waterston R.H."/>
            <person name="Wilson R.K."/>
        </authorList>
    </citation>
    <scope>NUCLEOTIDE SEQUENCE [LARGE SCALE GENOMIC DNA]</scope>
</reference>
<reference key="3">
    <citation type="submission" date="2005-09" db="EMBL/GenBank/DDBJ databases">
        <authorList>
            <person name="Mural R.J."/>
            <person name="Istrail S."/>
            <person name="Sutton G.G."/>
            <person name="Florea L."/>
            <person name="Halpern A.L."/>
            <person name="Mobarry C.M."/>
            <person name="Lippert R."/>
            <person name="Walenz B."/>
            <person name="Shatkay H."/>
            <person name="Dew I."/>
            <person name="Miller J.R."/>
            <person name="Flanigan M.J."/>
            <person name="Edwards N.J."/>
            <person name="Bolanos R."/>
            <person name="Fasulo D."/>
            <person name="Halldorsson B.V."/>
            <person name="Hannenhalli S."/>
            <person name="Turner R."/>
            <person name="Yooseph S."/>
            <person name="Lu F."/>
            <person name="Nusskern D.R."/>
            <person name="Shue B.C."/>
            <person name="Zheng X.H."/>
            <person name="Zhong F."/>
            <person name="Delcher A.L."/>
            <person name="Huson D.H."/>
            <person name="Kravitz S.A."/>
            <person name="Mouchard L."/>
            <person name="Reinert K."/>
            <person name="Remington K.A."/>
            <person name="Clark A.G."/>
            <person name="Waterman M.S."/>
            <person name="Eichler E.E."/>
            <person name="Adams M.D."/>
            <person name="Hunkapiller M.W."/>
            <person name="Myers E.W."/>
            <person name="Venter J.C."/>
        </authorList>
    </citation>
    <scope>NUCLEOTIDE SEQUENCE [LARGE SCALE GENOMIC DNA]</scope>
</reference>
<reference key="4">
    <citation type="journal article" date="2004" name="Genome Res.">
        <title>The status, quality, and expansion of the NIH full-length cDNA project: the Mammalian Gene Collection (MGC).</title>
        <authorList>
            <consortium name="The MGC Project Team"/>
        </authorList>
    </citation>
    <scope>NUCLEOTIDE SEQUENCE [LARGE SCALE MRNA]</scope>
    <source>
        <tissue>Brain</tissue>
    </source>
</reference>
<dbReference type="EMBL" id="AK098061">
    <property type="protein sequence ID" value="BAG53572.1"/>
    <property type="molecule type" value="mRNA"/>
</dbReference>
<dbReference type="EMBL" id="AC005586">
    <property type="protein sequence ID" value="AAS00383.1"/>
    <property type="molecule type" value="Genomic_DNA"/>
</dbReference>
<dbReference type="EMBL" id="CH471173">
    <property type="protein sequence ID" value="EAW54123.1"/>
    <property type="molecule type" value="Genomic_DNA"/>
</dbReference>
<dbReference type="EMBL" id="CH471173">
    <property type="protein sequence ID" value="EAW54124.1"/>
    <property type="molecule type" value="Genomic_DNA"/>
</dbReference>
<dbReference type="EMBL" id="CH471173">
    <property type="protein sequence ID" value="EAW54125.1"/>
    <property type="molecule type" value="Genomic_DNA"/>
</dbReference>
<dbReference type="EMBL" id="BC001354">
    <property type="protein sequence ID" value="AAH01354.1"/>
    <property type="molecule type" value="mRNA"/>
</dbReference>
<dbReference type="CCDS" id="CCDS5901.1"/>
<dbReference type="RefSeq" id="NP_001136400.1">
    <property type="nucleotide sequence ID" value="NM_001142928.2"/>
</dbReference>
<dbReference type="RefSeq" id="NP_001350362.1">
    <property type="nucleotide sequence ID" value="NM_001363433.1"/>
</dbReference>
<dbReference type="RefSeq" id="NP_001350363.1">
    <property type="nucleotide sequence ID" value="NM_001363434.1"/>
</dbReference>
<dbReference type="RefSeq" id="NP_076431.1">
    <property type="nucleotide sequence ID" value="NM_023942.3"/>
</dbReference>
<dbReference type="RefSeq" id="XP_006716158.1">
    <property type="nucleotide sequence ID" value="XM_006716095.2"/>
</dbReference>
<dbReference type="SMR" id="Q9BV99"/>
<dbReference type="BioGRID" id="122446">
    <property type="interactions" value="89"/>
</dbReference>
<dbReference type="FunCoup" id="Q9BV99">
    <property type="interactions" value="499"/>
</dbReference>
<dbReference type="IntAct" id="Q9BV99">
    <property type="interactions" value="31"/>
</dbReference>
<dbReference type="STRING" id="9606.ENSP00000352642"/>
<dbReference type="GlyGen" id="Q9BV99">
    <property type="glycosylation" value="2 sites"/>
</dbReference>
<dbReference type="iPTMnet" id="Q9BV99"/>
<dbReference type="PhosphoSitePlus" id="Q9BV99"/>
<dbReference type="BioMuta" id="LRRC61"/>
<dbReference type="DMDM" id="74761282"/>
<dbReference type="MassIVE" id="Q9BV99"/>
<dbReference type="PaxDb" id="9606-ENSP00000352642"/>
<dbReference type="PeptideAtlas" id="Q9BV99"/>
<dbReference type="ProteomicsDB" id="79188"/>
<dbReference type="Antibodypedia" id="18601">
    <property type="antibodies" value="52 antibodies from 16 providers"/>
</dbReference>
<dbReference type="DNASU" id="65999"/>
<dbReference type="Ensembl" id="ENST00000323078.7">
    <property type="protein sequence ID" value="ENSP00000339047.6"/>
    <property type="gene ID" value="ENSG00000127399.15"/>
</dbReference>
<dbReference type="Ensembl" id="ENST00000359623.9">
    <property type="protein sequence ID" value="ENSP00000352642.4"/>
    <property type="gene ID" value="ENSG00000127399.15"/>
</dbReference>
<dbReference type="Ensembl" id="ENST00000493307.1">
    <property type="protein sequence ID" value="ENSP00000420560.1"/>
    <property type="gene ID" value="ENSG00000127399.15"/>
</dbReference>
<dbReference type="GeneID" id="65999"/>
<dbReference type="KEGG" id="hsa:65999"/>
<dbReference type="MANE-Select" id="ENST00000359623.9">
    <property type="protein sequence ID" value="ENSP00000352642.4"/>
    <property type="RefSeq nucleotide sequence ID" value="NM_001142928.2"/>
    <property type="RefSeq protein sequence ID" value="NP_001136400.1"/>
</dbReference>
<dbReference type="UCSC" id="uc003wgw.4">
    <property type="organism name" value="human"/>
</dbReference>
<dbReference type="AGR" id="HGNC:21704"/>
<dbReference type="CTD" id="65999"/>
<dbReference type="GeneCards" id="LRRC61"/>
<dbReference type="HGNC" id="HGNC:21704">
    <property type="gene designation" value="LRRC61"/>
</dbReference>
<dbReference type="HPA" id="ENSG00000127399">
    <property type="expression patterns" value="Low tissue specificity"/>
</dbReference>
<dbReference type="neXtProt" id="NX_Q9BV99"/>
<dbReference type="OpenTargets" id="ENSG00000127399"/>
<dbReference type="PharmGKB" id="PA143485530"/>
<dbReference type="VEuPathDB" id="HostDB:ENSG00000127399"/>
<dbReference type="eggNOG" id="KOG0531">
    <property type="taxonomic scope" value="Eukaryota"/>
</dbReference>
<dbReference type="GeneTree" id="ENSGT00390000006479"/>
<dbReference type="HOGENOM" id="CLU_1073482_0_0_1"/>
<dbReference type="InParanoid" id="Q9BV99"/>
<dbReference type="OMA" id="YWESWPT"/>
<dbReference type="OrthoDB" id="433501at2759"/>
<dbReference type="PAN-GO" id="Q9BV99">
    <property type="GO annotations" value="2 GO annotations based on evolutionary models"/>
</dbReference>
<dbReference type="PhylomeDB" id="Q9BV99"/>
<dbReference type="TreeFam" id="TF329333"/>
<dbReference type="PathwayCommons" id="Q9BV99"/>
<dbReference type="SignaLink" id="Q9BV99"/>
<dbReference type="BioGRID-ORCS" id="65999">
    <property type="hits" value="5 hits in 1148 CRISPR screens"/>
</dbReference>
<dbReference type="ChiTaRS" id="LRRC61">
    <property type="organism name" value="human"/>
</dbReference>
<dbReference type="GenomeRNAi" id="65999"/>
<dbReference type="Pharos" id="Q9BV99">
    <property type="development level" value="Tdark"/>
</dbReference>
<dbReference type="PRO" id="PR:Q9BV99"/>
<dbReference type="Proteomes" id="UP000005640">
    <property type="component" value="Chromosome 7"/>
</dbReference>
<dbReference type="RNAct" id="Q9BV99">
    <property type="molecule type" value="protein"/>
</dbReference>
<dbReference type="Bgee" id="ENSG00000127399">
    <property type="expression patterns" value="Expressed in right uterine tube and 151 other cell types or tissues"/>
</dbReference>
<dbReference type="ExpressionAtlas" id="Q9BV99">
    <property type="expression patterns" value="baseline and differential"/>
</dbReference>
<dbReference type="GO" id="GO:0005737">
    <property type="term" value="C:cytoplasm"/>
    <property type="evidence" value="ECO:0000318"/>
    <property type="project" value="GO_Central"/>
</dbReference>
<dbReference type="GO" id="GO:0043014">
    <property type="term" value="F:alpha-tubulin binding"/>
    <property type="evidence" value="ECO:0000318"/>
    <property type="project" value="GO_Central"/>
</dbReference>
<dbReference type="GO" id="GO:0045504">
    <property type="term" value="F:dynein heavy chain binding"/>
    <property type="evidence" value="ECO:0000318"/>
    <property type="project" value="GO_Central"/>
</dbReference>
<dbReference type="GO" id="GO:0036158">
    <property type="term" value="P:outer dynein arm assembly"/>
    <property type="evidence" value="ECO:0000318"/>
    <property type="project" value="GO_Central"/>
</dbReference>
<dbReference type="FunFam" id="3.80.10.10:FF:000252">
    <property type="entry name" value="Leucine-rich repeat-containing protein 61"/>
    <property type="match status" value="1"/>
</dbReference>
<dbReference type="Gene3D" id="3.80.10.10">
    <property type="entry name" value="Ribonuclease Inhibitor"/>
    <property type="match status" value="1"/>
</dbReference>
<dbReference type="InterPro" id="IPR001611">
    <property type="entry name" value="Leu-rich_rpt"/>
</dbReference>
<dbReference type="InterPro" id="IPR032675">
    <property type="entry name" value="LRR_dom_sf"/>
</dbReference>
<dbReference type="PANTHER" id="PTHR18849">
    <property type="entry name" value="LEUCINE RICH REPEAT PROTEIN"/>
    <property type="match status" value="1"/>
</dbReference>
<dbReference type="PANTHER" id="PTHR18849:SF8">
    <property type="entry name" value="LEUCINE-RICH REPEAT-CONTAINING PROTEIN 61"/>
    <property type="match status" value="1"/>
</dbReference>
<dbReference type="Pfam" id="PF13855">
    <property type="entry name" value="LRR_8"/>
    <property type="match status" value="1"/>
</dbReference>
<dbReference type="PRINTS" id="PR00019">
    <property type="entry name" value="LEURICHRPT"/>
</dbReference>
<dbReference type="SUPFAM" id="SSF52058">
    <property type="entry name" value="L domain-like"/>
    <property type="match status" value="1"/>
</dbReference>
<dbReference type="PROSITE" id="PS51450">
    <property type="entry name" value="LRR"/>
    <property type="match status" value="3"/>
</dbReference>
<name>LRC61_HUMAN</name>
<feature type="chain" id="PRO_0000236796" description="Leucine-rich repeat-containing protein 61">
    <location>
        <begin position="1"/>
        <end position="259"/>
    </location>
</feature>
<feature type="repeat" description="LRR 1">
    <location>
        <begin position="32"/>
        <end position="53"/>
    </location>
</feature>
<feature type="repeat" description="LRR 2">
    <location>
        <begin position="54"/>
        <end position="75"/>
    </location>
</feature>
<feature type="repeat" description="LRR 3">
    <location>
        <begin position="76"/>
        <end position="97"/>
    </location>
</feature>
<feature type="repeat" description="LRR 4">
    <location>
        <begin position="98"/>
        <end position="119"/>
    </location>
</feature>
<feature type="domain" description="LRRCT">
    <location>
        <begin position="138"/>
        <end position="178"/>
    </location>
</feature>
<feature type="sequence variant" id="VAR_051123" description="In dbSNP:rs3735169." evidence="1">
    <original>N</original>
    <variation>S</variation>
    <location>
        <position position="143"/>
    </location>
</feature>
<organism>
    <name type="scientific">Homo sapiens</name>
    <name type="common">Human</name>
    <dbReference type="NCBI Taxonomy" id="9606"/>
    <lineage>
        <taxon>Eukaryota</taxon>
        <taxon>Metazoa</taxon>
        <taxon>Chordata</taxon>
        <taxon>Craniata</taxon>
        <taxon>Vertebrata</taxon>
        <taxon>Euteleostomi</taxon>
        <taxon>Mammalia</taxon>
        <taxon>Eutheria</taxon>
        <taxon>Euarchontoglires</taxon>
        <taxon>Primates</taxon>
        <taxon>Haplorrhini</taxon>
        <taxon>Catarrhini</taxon>
        <taxon>Hominidae</taxon>
        <taxon>Homo</taxon>
    </lineage>
</organism>
<evidence type="ECO:0000269" key="1">
    <source>
    </source>
</evidence>